<dbReference type="EMBL" id="DY314277">
    <property type="status" value="NOT_ANNOTATED_CDS"/>
    <property type="molecule type" value="mRNA"/>
</dbReference>
<dbReference type="EMBL" id="BK001286">
    <property type="protein sequence ID" value="DAA01325.1"/>
    <property type="molecule type" value="mRNA"/>
</dbReference>
<dbReference type="RefSeq" id="NP_996727.2">
    <property type="nucleotide sequence ID" value="NM_206845.2"/>
</dbReference>
<dbReference type="RefSeq" id="XP_038967845.1">
    <property type="nucleotide sequence ID" value="XM_039111917.2"/>
</dbReference>
<dbReference type="SMR" id="Q6IML7"/>
<dbReference type="FunCoup" id="Q6IML7">
    <property type="interactions" value="2339"/>
</dbReference>
<dbReference type="STRING" id="10116.ENSRNOP00000073490"/>
<dbReference type="PhosphoSitePlus" id="Q6IML7"/>
<dbReference type="PaxDb" id="10116-ENSRNOP00000005317"/>
<dbReference type="Ensembl" id="ENSRNOT00000005317.6">
    <property type="protein sequence ID" value="ENSRNOP00000005317.2"/>
    <property type="gene ID" value="ENSRNOG00000003988.7"/>
</dbReference>
<dbReference type="GeneID" id="298859"/>
<dbReference type="KEGG" id="rno:298859"/>
<dbReference type="AGR" id="RGD:1564414"/>
<dbReference type="CTD" id="51277"/>
<dbReference type="RGD" id="1564414">
    <property type="gene designation" value="Dnajc27"/>
</dbReference>
<dbReference type="eggNOG" id="KOG0098">
    <property type="taxonomic scope" value="Eukaryota"/>
</dbReference>
<dbReference type="GeneTree" id="ENSGT00940000157133"/>
<dbReference type="HOGENOM" id="CLU_041217_16_0_1"/>
<dbReference type="InParanoid" id="Q6IML7"/>
<dbReference type="PRO" id="PR:Q6IML7"/>
<dbReference type="Proteomes" id="UP000002494">
    <property type="component" value="Chromosome 6"/>
</dbReference>
<dbReference type="Bgee" id="ENSRNOG00000003988">
    <property type="expression patterns" value="Expressed in frontal cortex and 19 other cell types or tissues"/>
</dbReference>
<dbReference type="ExpressionAtlas" id="Q6IML7">
    <property type="expression patterns" value="baseline and differential"/>
</dbReference>
<dbReference type="GO" id="GO:0005634">
    <property type="term" value="C:nucleus"/>
    <property type="evidence" value="ECO:0000266"/>
    <property type="project" value="RGD"/>
</dbReference>
<dbReference type="GO" id="GO:0005525">
    <property type="term" value="F:GTP binding"/>
    <property type="evidence" value="ECO:0007669"/>
    <property type="project" value="UniProtKB-KW"/>
</dbReference>
<dbReference type="GO" id="GO:0003924">
    <property type="term" value="F:GTPase activity"/>
    <property type="evidence" value="ECO:0000266"/>
    <property type="project" value="RGD"/>
</dbReference>
<dbReference type="GO" id="GO:0006886">
    <property type="term" value="P:intracellular protein transport"/>
    <property type="evidence" value="ECO:0000318"/>
    <property type="project" value="GO_Central"/>
</dbReference>
<dbReference type="GO" id="GO:0070374">
    <property type="term" value="P:positive regulation of ERK1 and ERK2 cascade"/>
    <property type="evidence" value="ECO:0000266"/>
    <property type="project" value="RGD"/>
</dbReference>
<dbReference type="CDD" id="cd06257">
    <property type="entry name" value="DnaJ"/>
    <property type="match status" value="1"/>
</dbReference>
<dbReference type="CDD" id="cd04119">
    <property type="entry name" value="RJL"/>
    <property type="match status" value="1"/>
</dbReference>
<dbReference type="FunFam" id="3.40.50.300:FF:000697">
    <property type="entry name" value="DnaJ homolog subfamily C member 27"/>
    <property type="match status" value="1"/>
</dbReference>
<dbReference type="FunFam" id="1.10.287.110:FF:000019">
    <property type="entry name" value="dnaJ homolog subfamily C member 27"/>
    <property type="match status" value="1"/>
</dbReference>
<dbReference type="Gene3D" id="1.10.287.110">
    <property type="entry name" value="DnaJ domain"/>
    <property type="match status" value="1"/>
</dbReference>
<dbReference type="Gene3D" id="3.40.50.300">
    <property type="entry name" value="P-loop containing nucleotide triphosphate hydrolases"/>
    <property type="match status" value="1"/>
</dbReference>
<dbReference type="InterPro" id="IPR001623">
    <property type="entry name" value="DnaJ_domain"/>
</dbReference>
<dbReference type="InterPro" id="IPR036869">
    <property type="entry name" value="J_dom_sf"/>
</dbReference>
<dbReference type="InterPro" id="IPR027417">
    <property type="entry name" value="P-loop_NTPase"/>
</dbReference>
<dbReference type="InterPro" id="IPR005225">
    <property type="entry name" value="Small_GTP-bd"/>
</dbReference>
<dbReference type="InterPro" id="IPR001806">
    <property type="entry name" value="Small_GTPase"/>
</dbReference>
<dbReference type="NCBIfam" id="TIGR00231">
    <property type="entry name" value="small_GTP"/>
    <property type="match status" value="1"/>
</dbReference>
<dbReference type="PANTHER" id="PTHR47981">
    <property type="entry name" value="RAB FAMILY"/>
    <property type="match status" value="1"/>
</dbReference>
<dbReference type="PANTHER" id="PTHR47981:SF20">
    <property type="entry name" value="RAS-RELATED PROTEIN RAB-7A"/>
    <property type="match status" value="1"/>
</dbReference>
<dbReference type="Pfam" id="PF00226">
    <property type="entry name" value="DnaJ"/>
    <property type="match status" value="1"/>
</dbReference>
<dbReference type="Pfam" id="PF00071">
    <property type="entry name" value="Ras"/>
    <property type="match status" value="1"/>
</dbReference>
<dbReference type="PRINTS" id="PR00625">
    <property type="entry name" value="JDOMAIN"/>
</dbReference>
<dbReference type="PRINTS" id="PR00449">
    <property type="entry name" value="RASTRNSFRMNG"/>
</dbReference>
<dbReference type="SMART" id="SM00271">
    <property type="entry name" value="DnaJ"/>
    <property type="match status" value="1"/>
</dbReference>
<dbReference type="SMART" id="SM00175">
    <property type="entry name" value="RAB"/>
    <property type="match status" value="1"/>
</dbReference>
<dbReference type="SMART" id="SM00173">
    <property type="entry name" value="RAS"/>
    <property type="match status" value="1"/>
</dbReference>
<dbReference type="SMART" id="SM00174">
    <property type="entry name" value="RHO"/>
    <property type="match status" value="1"/>
</dbReference>
<dbReference type="SUPFAM" id="SSF46565">
    <property type="entry name" value="Chaperone J-domain"/>
    <property type="match status" value="1"/>
</dbReference>
<dbReference type="SUPFAM" id="SSF52540">
    <property type="entry name" value="P-loop containing nucleoside triphosphate hydrolases"/>
    <property type="match status" value="1"/>
</dbReference>
<dbReference type="PROSITE" id="PS50076">
    <property type="entry name" value="DNAJ_2"/>
    <property type="match status" value="1"/>
</dbReference>
<dbReference type="PROSITE" id="PS51419">
    <property type="entry name" value="RAB"/>
    <property type="match status" value="1"/>
</dbReference>
<reference key="1">
    <citation type="journal article" date="2004" name="Genome Res.">
        <title>The status, quality, and expansion of the NIH full-length cDNA project: the Mammalian Gene Collection (MGC).</title>
        <authorList>
            <consortium name="The MGC Project Team"/>
        </authorList>
    </citation>
    <scope>NUCLEOTIDE SEQUENCE [LARGE SCALE MRNA] OF 1-169</scope>
    <source>
        <tissue>Brain</tissue>
    </source>
</reference>
<reference key="2">
    <citation type="journal article" date="2004" name="Gene">
        <title>RJLs: a new family of Ras-related GTP-binding proteins.</title>
        <authorList>
            <person name="Nepomuceno-Silva J.L."/>
            <person name="de Melo L.D."/>
            <person name="Mendonca S.M."/>
            <person name="Paixao J.C."/>
            <person name="Lopes U.G."/>
        </authorList>
    </citation>
    <scope>IDENTIFICATION</scope>
</reference>
<accession>Q6IML7</accession>
<sequence>MESNVPKRKEPLKSLRIKVISMGNAEVGKSCIIKRYCEKRFVSKYLATIGIDYGVTKVQVRDREIKVNIFDMAGHPFFFEVRNEFYKDTQGVILVYDVGQKDSFDALDSWLAEMKQELGPHGNMENIVFVVCANKIDCSKHRCIDESEGRLWAESRGFLYFETSAQTGEGINEMFQTFYMSIVDLCENGGKRPTANSSASYTKEQADTIRRIRTSKDSWEMLGVRPGASREEVNKAYRKLAVLLHPDKCVAPGSEDAFKAVVNARTALLKNIK</sequence>
<comment type="function">
    <text evidence="2">GTPase which can activate the MEK/ERK pathway and induce cell transformation when overexpressed. May act as a nuclear scaffold for MAPK1, probably by association with MAPK1 nuclear export signal leading to enhanced ERK1/ERK2 signaling.</text>
</comment>
<comment type="subunit">
    <text evidence="2">Interacts directly with MAPK1 (wild-type and kinase-deficient forms). Interacts directly (in GTP-bound form) with MAP2K1 (wild-type and kinase-deficient forms).</text>
</comment>
<comment type="subcellular location">
    <subcellularLocation>
        <location evidence="2">Nucleus</location>
    </subcellularLocation>
</comment>
<comment type="similarity">
    <text evidence="4">Belongs to the small GTPase superfamily. Rab family.</text>
</comment>
<protein>
    <recommendedName>
        <fullName>DnaJ homolog subfamily C member 27</fullName>
    </recommendedName>
    <alternativeName>
        <fullName>Rab and DnaJ domain-containing protein</fullName>
    </alternativeName>
</protein>
<keyword id="KW-0342">GTP-binding</keyword>
<keyword id="KW-0547">Nucleotide-binding</keyword>
<keyword id="KW-0539">Nucleus</keyword>
<keyword id="KW-1185">Reference proteome</keyword>
<evidence type="ECO:0000250" key="1"/>
<evidence type="ECO:0000250" key="2">
    <source>
        <dbReference type="UniProtKB" id="Q8CFP6"/>
    </source>
</evidence>
<evidence type="ECO:0000255" key="3">
    <source>
        <dbReference type="PROSITE-ProRule" id="PRU00286"/>
    </source>
</evidence>
<evidence type="ECO:0000305" key="4"/>
<feature type="chain" id="PRO_0000332978" description="DnaJ homolog subfamily C member 27">
    <location>
        <begin position="1"/>
        <end position="273"/>
    </location>
</feature>
<feature type="domain" description="J" evidence="3">
    <location>
        <begin position="217"/>
        <end position="273"/>
    </location>
</feature>
<feature type="region of interest" description="Required for interaction with MAPK1" evidence="2">
    <location>
        <begin position="1"/>
        <end position="18"/>
    </location>
</feature>
<feature type="binding site" evidence="1">
    <location>
        <begin position="23"/>
        <end position="30"/>
    </location>
    <ligand>
        <name>GTP</name>
        <dbReference type="ChEBI" id="CHEBI:37565"/>
    </ligand>
</feature>
<feature type="binding site" evidence="1">
    <location>
        <begin position="71"/>
        <end position="75"/>
    </location>
    <ligand>
        <name>GTP</name>
        <dbReference type="ChEBI" id="CHEBI:37565"/>
    </ligand>
</feature>
<feature type="binding site" evidence="1">
    <location>
        <begin position="134"/>
        <end position="137"/>
    </location>
    <ligand>
        <name>GTP</name>
        <dbReference type="ChEBI" id="CHEBI:37565"/>
    </ligand>
</feature>
<name>DJC27_RAT</name>
<organism>
    <name type="scientific">Rattus norvegicus</name>
    <name type="common">Rat</name>
    <dbReference type="NCBI Taxonomy" id="10116"/>
    <lineage>
        <taxon>Eukaryota</taxon>
        <taxon>Metazoa</taxon>
        <taxon>Chordata</taxon>
        <taxon>Craniata</taxon>
        <taxon>Vertebrata</taxon>
        <taxon>Euteleostomi</taxon>
        <taxon>Mammalia</taxon>
        <taxon>Eutheria</taxon>
        <taxon>Euarchontoglires</taxon>
        <taxon>Glires</taxon>
        <taxon>Rodentia</taxon>
        <taxon>Myomorpha</taxon>
        <taxon>Muroidea</taxon>
        <taxon>Muridae</taxon>
        <taxon>Murinae</taxon>
        <taxon>Rattus</taxon>
    </lineage>
</organism>
<gene>
    <name type="primary">Dnajc27</name>
    <name type="synonym">Rbj</name>
</gene>
<proteinExistence type="evidence at transcript level"/>